<proteinExistence type="inferred from homology"/>
<sequence length="561" mass="60351">MNINVAELLNGNYILLLFVVLALGLCLGKLRLGSIQLGNSIGVLVVSLLLGQQHFSINTDALNLGFMLFIFCVGVEAGPNFFSIFFRDGKNYLMLALVMVGSALVIALGLGKLFGWDIGLTAGMLAGSMTSTPVLVGAGDTLRHSGMESRQLSLALDNLSLGYALTYLIGLVSLIVGARYLPKLQHQDLQTSAQQIARERGLDTDANRKVYLPVIRAYRVGPELVAWTDGKNLRELGIYRQTGCYIERIRRNGILANPDGDAVLQMGDEIALVGYPDAHARLDPSFRNGKEVFDRDLLDMRIVTEEVVVKNHNAVGKRLAQLKLTDHGCFLNRVIRSQIEMPIDDNVVLNKGDVLQVSGDARRVKTIADRIGFISIHSQVTDLLAFCAFFVIGLMIGMITFQFSTFSFGMGNAAGLLFAGIMLGFMRANHPTFGYIPQGALSMVKEFGLMVFMAGVGLSAGSGINNGLGAIGGQMLIAGLIVSLVPVVICFLFGAYVLRMNRALLFGAMMGARTCAPAMEIISDTARSNIPALGYAGTYAIANVLLTLAGTIIVMVWPGLG</sequence>
<reference key="1">
    <citation type="journal article" date="2009" name="PLoS Genet.">
        <title>Organised genome dynamics in the Escherichia coli species results in highly diverse adaptive paths.</title>
        <authorList>
            <person name="Touchon M."/>
            <person name="Hoede C."/>
            <person name="Tenaillon O."/>
            <person name="Barbe V."/>
            <person name="Baeriswyl S."/>
            <person name="Bidet P."/>
            <person name="Bingen E."/>
            <person name="Bonacorsi S."/>
            <person name="Bouchier C."/>
            <person name="Bouvet O."/>
            <person name="Calteau A."/>
            <person name="Chiapello H."/>
            <person name="Clermont O."/>
            <person name="Cruveiller S."/>
            <person name="Danchin A."/>
            <person name="Diard M."/>
            <person name="Dossat C."/>
            <person name="Karoui M.E."/>
            <person name="Frapy E."/>
            <person name="Garry L."/>
            <person name="Ghigo J.M."/>
            <person name="Gilles A.M."/>
            <person name="Johnson J."/>
            <person name="Le Bouguenec C."/>
            <person name="Lescat M."/>
            <person name="Mangenot S."/>
            <person name="Martinez-Jehanne V."/>
            <person name="Matic I."/>
            <person name="Nassif X."/>
            <person name="Oztas S."/>
            <person name="Petit M.A."/>
            <person name="Pichon C."/>
            <person name="Rouy Z."/>
            <person name="Ruf C.S."/>
            <person name="Schneider D."/>
            <person name="Tourret J."/>
            <person name="Vacherie B."/>
            <person name="Vallenet D."/>
            <person name="Medigue C."/>
            <person name="Rocha E.P.C."/>
            <person name="Denamur E."/>
        </authorList>
    </citation>
    <scope>NUCLEOTIDE SEQUENCE [LARGE SCALE GENOMIC DNA]</scope>
    <source>
        <strain>IAI39 / ExPEC</strain>
    </source>
</reference>
<protein>
    <recommendedName>
        <fullName evidence="1">Putative transport protein YbjL</fullName>
    </recommendedName>
</protein>
<organism>
    <name type="scientific">Escherichia coli O7:K1 (strain IAI39 / ExPEC)</name>
    <dbReference type="NCBI Taxonomy" id="585057"/>
    <lineage>
        <taxon>Bacteria</taxon>
        <taxon>Pseudomonadati</taxon>
        <taxon>Pseudomonadota</taxon>
        <taxon>Gammaproteobacteria</taxon>
        <taxon>Enterobacterales</taxon>
        <taxon>Enterobacteriaceae</taxon>
        <taxon>Escherichia</taxon>
    </lineage>
</organism>
<gene>
    <name evidence="1" type="primary">ybjL</name>
    <name type="ordered locus">ECIAI39_0826</name>
</gene>
<comment type="subcellular location">
    <subcellularLocation>
        <location evidence="1">Cell membrane</location>
        <topology evidence="1">Multi-pass membrane protein</topology>
    </subcellularLocation>
</comment>
<comment type="similarity">
    <text evidence="1">Belongs to the AAE transporter (TC 2.A.81) family. YbjL subfamily.</text>
</comment>
<keyword id="KW-1003">Cell membrane</keyword>
<keyword id="KW-0472">Membrane</keyword>
<keyword id="KW-0677">Repeat</keyword>
<keyword id="KW-0812">Transmembrane</keyword>
<keyword id="KW-1133">Transmembrane helix</keyword>
<keyword id="KW-0813">Transport</keyword>
<feature type="chain" id="PRO_1000135180" description="Putative transport protein YbjL">
    <location>
        <begin position="1"/>
        <end position="561"/>
    </location>
</feature>
<feature type="transmembrane region" description="Helical" evidence="1">
    <location>
        <begin position="8"/>
        <end position="28"/>
    </location>
</feature>
<feature type="transmembrane region" description="Helical" evidence="1">
    <location>
        <begin position="32"/>
        <end position="52"/>
    </location>
</feature>
<feature type="transmembrane region" description="Helical" evidence="1">
    <location>
        <begin position="66"/>
        <end position="86"/>
    </location>
</feature>
<feature type="transmembrane region" description="Helical" evidence="1">
    <location>
        <begin position="94"/>
        <end position="114"/>
    </location>
</feature>
<feature type="transmembrane region" description="Helical" evidence="1">
    <location>
        <begin position="158"/>
        <end position="178"/>
    </location>
</feature>
<feature type="transmembrane region" description="Helical" evidence="1">
    <location>
        <begin position="383"/>
        <end position="403"/>
    </location>
</feature>
<feature type="transmembrane region" description="Helical" evidence="1">
    <location>
        <begin position="406"/>
        <end position="426"/>
    </location>
</feature>
<feature type="transmembrane region" description="Helical" evidence="1">
    <location>
        <begin position="451"/>
        <end position="471"/>
    </location>
</feature>
<feature type="transmembrane region" description="Helical" evidence="1">
    <location>
        <begin position="475"/>
        <end position="495"/>
    </location>
</feature>
<feature type="transmembrane region" description="Helical" evidence="1">
    <location>
        <begin position="540"/>
        <end position="560"/>
    </location>
</feature>
<feature type="domain" description="RCK C-terminal 1" evidence="1">
    <location>
        <begin position="200"/>
        <end position="288"/>
    </location>
</feature>
<feature type="domain" description="RCK C-terminal 2" evidence="1">
    <location>
        <begin position="292"/>
        <end position="373"/>
    </location>
</feature>
<accession>B7NNT0</accession>
<dbReference type="EMBL" id="CU928164">
    <property type="protein sequence ID" value="CAR16963.1"/>
    <property type="molecule type" value="Genomic_DNA"/>
</dbReference>
<dbReference type="RefSeq" id="WP_001024876.1">
    <property type="nucleotide sequence ID" value="NC_011750.1"/>
</dbReference>
<dbReference type="RefSeq" id="YP_002406851.1">
    <property type="nucleotide sequence ID" value="NC_011750.1"/>
</dbReference>
<dbReference type="SMR" id="B7NNT0"/>
<dbReference type="STRING" id="585057.ECIAI39_0826"/>
<dbReference type="KEGG" id="ect:ECIAI39_0826"/>
<dbReference type="PATRIC" id="fig|585057.6.peg.871"/>
<dbReference type="HOGENOM" id="CLU_035023_2_2_6"/>
<dbReference type="Proteomes" id="UP000000749">
    <property type="component" value="Chromosome"/>
</dbReference>
<dbReference type="GO" id="GO:0005886">
    <property type="term" value="C:plasma membrane"/>
    <property type="evidence" value="ECO:0007669"/>
    <property type="project" value="UniProtKB-SubCell"/>
</dbReference>
<dbReference type="GO" id="GO:0008324">
    <property type="term" value="F:monoatomic cation transmembrane transporter activity"/>
    <property type="evidence" value="ECO:0007669"/>
    <property type="project" value="InterPro"/>
</dbReference>
<dbReference type="GO" id="GO:0006813">
    <property type="term" value="P:potassium ion transport"/>
    <property type="evidence" value="ECO:0007669"/>
    <property type="project" value="InterPro"/>
</dbReference>
<dbReference type="FunFam" id="3.30.70.1450:FF:000003">
    <property type="entry name" value="Putative transport protein YbjL"/>
    <property type="match status" value="1"/>
</dbReference>
<dbReference type="Gene3D" id="3.30.70.1450">
    <property type="entry name" value="Regulator of K+ conductance, C-terminal domain"/>
    <property type="match status" value="2"/>
</dbReference>
<dbReference type="HAMAP" id="MF_01015">
    <property type="entry name" value="YbjL"/>
    <property type="match status" value="1"/>
</dbReference>
<dbReference type="InterPro" id="IPR050144">
    <property type="entry name" value="AAE_transporter"/>
</dbReference>
<dbReference type="InterPro" id="IPR006037">
    <property type="entry name" value="RCK_C"/>
</dbReference>
<dbReference type="InterPro" id="IPR036721">
    <property type="entry name" value="RCK_C_sf"/>
</dbReference>
<dbReference type="InterPro" id="IPR023017">
    <property type="entry name" value="Transp_YbjL_put"/>
</dbReference>
<dbReference type="InterPro" id="IPR006512">
    <property type="entry name" value="YidE_YbjL"/>
</dbReference>
<dbReference type="NCBIfam" id="NF003440">
    <property type="entry name" value="PRK04972.1"/>
    <property type="match status" value="1"/>
</dbReference>
<dbReference type="NCBIfam" id="TIGR01625">
    <property type="entry name" value="YidE_YbjL_dupl"/>
    <property type="match status" value="2"/>
</dbReference>
<dbReference type="PANTHER" id="PTHR30445">
    <property type="entry name" value="K(+)_H(+) ANTIPORTER SUBUNIT KHTT"/>
    <property type="match status" value="1"/>
</dbReference>
<dbReference type="PANTHER" id="PTHR30445:SF10">
    <property type="entry name" value="TRANSPORT PROTEIN YBJL-RELATED"/>
    <property type="match status" value="1"/>
</dbReference>
<dbReference type="Pfam" id="PF06826">
    <property type="entry name" value="Asp-Al_Ex"/>
    <property type="match status" value="2"/>
</dbReference>
<dbReference type="Pfam" id="PF02080">
    <property type="entry name" value="TrkA_C"/>
    <property type="match status" value="2"/>
</dbReference>
<dbReference type="SUPFAM" id="SSF116726">
    <property type="entry name" value="TrkA C-terminal domain-like"/>
    <property type="match status" value="2"/>
</dbReference>
<dbReference type="PROSITE" id="PS51202">
    <property type="entry name" value="RCK_C"/>
    <property type="match status" value="2"/>
</dbReference>
<evidence type="ECO:0000255" key="1">
    <source>
        <dbReference type="HAMAP-Rule" id="MF_01015"/>
    </source>
</evidence>
<name>YBJL_ECO7I</name>